<name>MCPN_PSEAE</name>
<reference key="1">
    <citation type="journal article" date="2000" name="Nature">
        <title>Complete genome sequence of Pseudomonas aeruginosa PAO1, an opportunistic pathogen.</title>
        <authorList>
            <person name="Stover C.K."/>
            <person name="Pham X.-Q.T."/>
            <person name="Erwin A.L."/>
            <person name="Mizoguchi S.D."/>
            <person name="Warrener P."/>
            <person name="Hickey M.J."/>
            <person name="Brinkman F.S.L."/>
            <person name="Hufnagle W.O."/>
            <person name="Kowalik D.J."/>
            <person name="Lagrou M."/>
            <person name="Garber R.L."/>
            <person name="Goltry L."/>
            <person name="Tolentino E."/>
            <person name="Westbrock-Wadman S."/>
            <person name="Yuan Y."/>
            <person name="Brody L.L."/>
            <person name="Coulter S.N."/>
            <person name="Folger K.R."/>
            <person name="Kas A."/>
            <person name="Larbig K."/>
            <person name="Lim R.M."/>
            <person name="Smith K.A."/>
            <person name="Spencer D.H."/>
            <person name="Wong G.K.-S."/>
            <person name="Wu Z."/>
            <person name="Paulsen I.T."/>
            <person name="Reizer J."/>
            <person name="Saier M.H. Jr."/>
            <person name="Hancock R.E.W."/>
            <person name="Lory S."/>
            <person name="Olson M.V."/>
        </authorList>
    </citation>
    <scope>NUCLEOTIDE SEQUENCE [LARGE SCALE GENOMIC DNA]</scope>
    <source>
        <strain>ATCC 15692 / DSM 22644 / CIP 104116 / JCM 14847 / LMG 12228 / 1C / PRS 101 / PAO1</strain>
    </source>
</reference>
<reference evidence="9" key="2">
    <citation type="journal article" date="2019" name="MBio">
        <title>The molecular mechanism of nitrate chemotaxis via direct ligand binding to the PilJ domain of McpN.</title>
        <authorList>
            <person name="Martin-Mora D."/>
            <person name="Ortega A."/>
            <person name="Matilla M.A."/>
            <person name="Martinez-Rodriguez S."/>
            <person name="Gavira J.A."/>
            <person name="Krell T."/>
        </authorList>
    </citation>
    <scope>X-RAY CRYSTALLOGRAPHY (1.30 ANGSTROMS) OF 44-179 IN COMPLEX WITH NITRATE</scope>
    <scope>FUNCTION</scope>
    <scope>SUBUNIT</scope>
    <scope>INDUCTION</scope>
    <scope>DOMAIN</scope>
    <scope>DISRUPTION PHENOTYPE</scope>
    <scope>MUTAGENESIS OF ARG-61</scope>
    <source>
        <strain>ATCC 15692 / DSM 22644 / CIP 104116 / JCM 14847 / LMG 12228 / 1C / PRS 101 / PAO1</strain>
    </source>
</reference>
<comment type="function">
    <text evidence="4">Chemotactic-signal transducers respond to changes in the concentration of attractants and repellents in the environment, transduce a signal from the outside to the inside of the cell, and facilitate sensory adaptation through the variation of the level of methylation. McpN is a chemoreceptor that recognizes specifically nitrate and mediates chemoattraction. Binds nitrate specifically and shows no affinity for other ligands such as nitrite. McpN-mediated taxis occurs only under nitrate starvation conditions.</text>
</comment>
<comment type="subunit">
    <text evidence="4">Ligand free ligand-binding domain (LBD) is present in a monomer-dimer equilibrium. Nitrate binding to the periplasmic LBD stabilizes the homodimer.</text>
</comment>
<comment type="subcellular location">
    <subcellularLocation>
        <location evidence="7">Cell inner membrane</location>
        <topology evidence="1">Multi-pass membrane protein</topology>
    </subcellularLocation>
</comment>
<comment type="induction">
    <text evidence="4">Expression is repressed in the presence of nitrate.</text>
</comment>
<comment type="domain">
    <text evidence="4">A single nitrate molecule is bound to a site on the dimer symmetry axis.</text>
</comment>
<comment type="disruption phenotype">
    <text evidence="4">Mutant does not show nitrate chemotaxis.</text>
</comment>
<comment type="similarity">
    <text evidence="6">Belongs to the methyl-accepting chemotaxis (MCP) protein family.</text>
</comment>
<proteinExistence type="evidence at protein level"/>
<keyword id="KW-0002">3D-structure</keyword>
<keyword id="KW-0997">Cell inner membrane</keyword>
<keyword id="KW-1003">Cell membrane</keyword>
<keyword id="KW-0145">Chemotaxis</keyword>
<keyword id="KW-0472">Membrane</keyword>
<keyword id="KW-0488">Methylation</keyword>
<keyword id="KW-1185">Reference proteome</keyword>
<keyword id="KW-0807">Transducer</keyword>
<keyword id="KW-0812">Transmembrane</keyword>
<keyword id="KW-1133">Transmembrane helix</keyword>
<feature type="chain" id="PRO_0000454719" description="Methyl-accepting chemotaxis protein McpN">
    <location>
        <begin position="1"/>
        <end position="531"/>
    </location>
</feature>
<feature type="topological domain" description="Cytoplasmic" evidence="6">
    <location>
        <begin position="1"/>
        <end position="24"/>
    </location>
</feature>
<feature type="transmembrane region" description="Helical" evidence="1">
    <location>
        <begin position="25"/>
        <end position="45"/>
    </location>
</feature>
<feature type="topological domain" description="Periplasmic" evidence="6">
    <location>
        <begin position="46"/>
        <end position="174"/>
    </location>
</feature>
<feature type="transmembrane region" description="Helical" evidence="1">
    <location>
        <begin position="175"/>
        <end position="195"/>
    </location>
</feature>
<feature type="topological domain" description="Cytoplasmic" evidence="6">
    <location>
        <begin position="196"/>
        <end position="531"/>
    </location>
</feature>
<feature type="domain" description="HAMP" evidence="2">
    <location>
        <begin position="201"/>
        <end position="254"/>
    </location>
</feature>
<feature type="domain" description="Methyl-accepting transducer" evidence="3">
    <location>
        <begin position="259"/>
        <end position="495"/>
    </location>
</feature>
<feature type="region of interest" description="PilJ-type" evidence="7">
    <location>
        <begin position="52"/>
        <end position="140"/>
    </location>
</feature>
<feature type="short sequence motif" description="N-box" evidence="7">
    <location>
        <begin position="54"/>
        <end position="65"/>
    </location>
</feature>
<feature type="binding site" evidence="4 9">
    <location>
        <position position="61"/>
    </location>
    <ligand>
        <name>nitrate</name>
        <dbReference type="ChEBI" id="CHEBI:17632"/>
    </ligand>
</feature>
<feature type="mutagenesis site" description="Unable to recognize nitrate." evidence="4">
    <original>R</original>
    <variation>A</variation>
    <location>
        <position position="61"/>
    </location>
</feature>
<feature type="helix" evidence="10">
    <location>
        <begin position="51"/>
        <end position="75"/>
    </location>
</feature>
<feature type="helix" evidence="10">
    <location>
        <begin position="81"/>
        <end position="100"/>
    </location>
</feature>
<feature type="turn" evidence="10">
    <location>
        <begin position="103"/>
        <end position="106"/>
    </location>
</feature>
<feature type="helix" evidence="10">
    <location>
        <begin position="113"/>
        <end position="136"/>
    </location>
</feature>
<feature type="helix" evidence="10">
    <location>
        <begin position="145"/>
        <end position="170"/>
    </location>
</feature>
<evidence type="ECO:0000255" key="1"/>
<evidence type="ECO:0000255" key="2">
    <source>
        <dbReference type="PROSITE-ProRule" id="PRU00102"/>
    </source>
</evidence>
<evidence type="ECO:0000255" key="3">
    <source>
        <dbReference type="PROSITE-ProRule" id="PRU00284"/>
    </source>
</evidence>
<evidence type="ECO:0000269" key="4">
    <source>
    </source>
</evidence>
<evidence type="ECO:0000303" key="5">
    <source>
    </source>
</evidence>
<evidence type="ECO:0000305" key="6"/>
<evidence type="ECO:0000305" key="7">
    <source>
    </source>
</evidence>
<evidence type="ECO:0000312" key="8">
    <source>
        <dbReference type="EMBL" id="AAG06176.1"/>
    </source>
</evidence>
<evidence type="ECO:0007744" key="9">
    <source>
        <dbReference type="PDB" id="6GCV"/>
    </source>
</evidence>
<evidence type="ECO:0007829" key="10">
    <source>
        <dbReference type="PDB" id="6GCV"/>
    </source>
</evidence>
<gene>
    <name evidence="5" type="primary">mcpN</name>
    <name evidence="8" type="ordered locus">PA2788</name>
</gene>
<organism>
    <name type="scientific">Pseudomonas aeruginosa (strain ATCC 15692 / DSM 22644 / CIP 104116 / JCM 14847 / LMG 12228 / 1C / PRS 101 / PAO1)</name>
    <dbReference type="NCBI Taxonomy" id="208964"/>
    <lineage>
        <taxon>Bacteria</taxon>
        <taxon>Pseudomonadati</taxon>
        <taxon>Pseudomonadota</taxon>
        <taxon>Gammaproteobacteria</taxon>
        <taxon>Pseudomonadales</taxon>
        <taxon>Pseudomonadaceae</taxon>
        <taxon>Pseudomonas</taxon>
    </lineage>
</organism>
<protein>
    <recommendedName>
        <fullName evidence="6">Methyl-accepting chemotaxis protein McpN</fullName>
    </recommendedName>
</protein>
<dbReference type="EMBL" id="AE004091">
    <property type="protein sequence ID" value="AAG06176.1"/>
    <property type="molecule type" value="Genomic_DNA"/>
</dbReference>
<dbReference type="PIR" id="D83297">
    <property type="entry name" value="D83297"/>
</dbReference>
<dbReference type="RefSeq" id="NP_251478.1">
    <property type="nucleotide sequence ID" value="NC_002516.2"/>
</dbReference>
<dbReference type="RefSeq" id="WP_003114783.1">
    <property type="nucleotide sequence ID" value="NZ_QZGE01000011.1"/>
</dbReference>
<dbReference type="PDB" id="6GCV">
    <property type="method" value="X-ray"/>
    <property type="resolution" value="1.30 A"/>
    <property type="chains" value="A/B/C=44-179"/>
</dbReference>
<dbReference type="PDBsum" id="6GCV"/>
<dbReference type="SMR" id="Q9I055"/>
<dbReference type="FunCoup" id="Q9I055">
    <property type="interactions" value="197"/>
</dbReference>
<dbReference type="STRING" id="208964.PA2788"/>
<dbReference type="PaxDb" id="208964-PA2788"/>
<dbReference type="GeneID" id="882783"/>
<dbReference type="KEGG" id="pae:PA2788"/>
<dbReference type="PATRIC" id="fig|208964.12.peg.2927"/>
<dbReference type="PseudoCAP" id="PA2788"/>
<dbReference type="HOGENOM" id="CLU_000445_107_27_6"/>
<dbReference type="InParanoid" id="Q9I055"/>
<dbReference type="OrthoDB" id="49457at2"/>
<dbReference type="PhylomeDB" id="Q9I055"/>
<dbReference type="BioCyc" id="PAER208964:G1FZ6-2836-MONOMER"/>
<dbReference type="Proteomes" id="UP000002438">
    <property type="component" value="Chromosome"/>
</dbReference>
<dbReference type="GO" id="GO:0005886">
    <property type="term" value="C:plasma membrane"/>
    <property type="evidence" value="ECO:0007669"/>
    <property type="project" value="UniProtKB-SubCell"/>
</dbReference>
<dbReference type="GO" id="GO:0006935">
    <property type="term" value="P:chemotaxis"/>
    <property type="evidence" value="ECO:0000318"/>
    <property type="project" value="GO_Central"/>
</dbReference>
<dbReference type="GO" id="GO:0007165">
    <property type="term" value="P:signal transduction"/>
    <property type="evidence" value="ECO:0007669"/>
    <property type="project" value="UniProtKB-KW"/>
</dbReference>
<dbReference type="CDD" id="cd11386">
    <property type="entry name" value="MCP_signal"/>
    <property type="match status" value="1"/>
</dbReference>
<dbReference type="FunFam" id="1.10.287.950:FF:000001">
    <property type="entry name" value="Methyl-accepting chemotaxis sensory transducer"/>
    <property type="match status" value="1"/>
</dbReference>
<dbReference type="Gene3D" id="1.10.287.950">
    <property type="entry name" value="Methyl-accepting chemotaxis protein"/>
    <property type="match status" value="1"/>
</dbReference>
<dbReference type="InterPro" id="IPR003660">
    <property type="entry name" value="HAMP_dom"/>
</dbReference>
<dbReference type="InterPro" id="IPR004089">
    <property type="entry name" value="MCPsignal_dom"/>
</dbReference>
<dbReference type="InterPro" id="IPR029095">
    <property type="entry name" value="NarX-like_N"/>
</dbReference>
<dbReference type="InterPro" id="IPR000727">
    <property type="entry name" value="T_SNARE_dom"/>
</dbReference>
<dbReference type="PANTHER" id="PTHR32089:SF119">
    <property type="entry name" value="METHYL-ACCEPTING CHEMOTAXIS PROTEIN CTPL"/>
    <property type="match status" value="1"/>
</dbReference>
<dbReference type="PANTHER" id="PTHR32089">
    <property type="entry name" value="METHYL-ACCEPTING CHEMOTAXIS PROTEIN MCPB"/>
    <property type="match status" value="1"/>
</dbReference>
<dbReference type="Pfam" id="PF00015">
    <property type="entry name" value="MCPsignal"/>
    <property type="match status" value="1"/>
</dbReference>
<dbReference type="Pfam" id="PF13675">
    <property type="entry name" value="PilJ"/>
    <property type="match status" value="1"/>
</dbReference>
<dbReference type="SMART" id="SM00283">
    <property type="entry name" value="MA"/>
    <property type="match status" value="1"/>
</dbReference>
<dbReference type="SUPFAM" id="SSF58104">
    <property type="entry name" value="Methyl-accepting chemotaxis protein (MCP) signaling domain"/>
    <property type="match status" value="1"/>
</dbReference>
<dbReference type="PROSITE" id="PS50111">
    <property type="entry name" value="CHEMOTAXIS_TRANSDUC_2"/>
    <property type="match status" value="1"/>
</dbReference>
<dbReference type="PROSITE" id="PS50885">
    <property type="entry name" value="HAMP"/>
    <property type="match status" value="1"/>
</dbReference>
<sequence>MNESVARVFDRILRGLGLKTLNAQFLLSYALMFGLAACASVALYLSMSISPETINVAGAQRMLSQKMAREALQLRLGAGDPKALAATIAQYERSAADLDAGNAERNVSRMGAPEIAAQRQKVAQIWGRYRAMLDQVAQPASQVDLRGFSQYSTELLGELNNLVSLMSARADSVQHTQMWIAFGCLLAILVLVVLGRQFGLAPLMRQLRGLEVALTEVGAANFTHALAAGHADNEIGRIVAGYERMRQDVSGLLANVKRSAAETDKDVAEALEQALGAGDQVARQHQDLDQVATAMNEMSATVAEVARHANHAAHSTRDAAALAHEGRRLVEHASSQTGALAEELEQTALALNTLHQHAGSVGQVLTVISSIAEQTNLLALNAAIEAARAGEAGRGFAVVADEVRSLANRTQQSTQEIQGLIEQLQDGANDAVAAMRGSASHAQSNLVEADSAAQALGRIVATVEELDGLNQQIATAAEEQSQVAQDIDRNITNVSGLSEQAHEGTAAVLSANQRVKEHMAGLRVVLGRFRT</sequence>
<accession>Q9I055</accession>